<name>RPOA_ECOL6</name>
<comment type="function">
    <text evidence="1">DNA-dependent RNA polymerase catalyzes the transcription of DNA into RNA using the four ribonucleoside triphosphates as substrates.</text>
</comment>
<comment type="catalytic activity">
    <reaction>
        <text>RNA(n) + a ribonucleoside 5'-triphosphate = RNA(n+1) + diphosphate</text>
        <dbReference type="Rhea" id="RHEA:21248"/>
        <dbReference type="Rhea" id="RHEA-COMP:14527"/>
        <dbReference type="Rhea" id="RHEA-COMP:17342"/>
        <dbReference type="ChEBI" id="CHEBI:33019"/>
        <dbReference type="ChEBI" id="CHEBI:61557"/>
        <dbReference type="ChEBI" id="CHEBI:140395"/>
        <dbReference type="EC" id="2.7.7.6"/>
    </reaction>
</comment>
<comment type="subunit">
    <text evidence="1">Homodimer. The RNAP catalytic core consists of 2 alpha, 1 beta, 1 beta' and 1 omega subunit. When a sigma factor is associated with the core the holoenzyme is formed, which can initiate transcription (By similarity).</text>
</comment>
<comment type="domain">
    <text evidence="1">The N-terminal domain is essential for RNAP assembly and basal transcription, whereas the C-terminal domain is involved in interaction with transcriptional regulators and with upstream promoter elements.</text>
</comment>
<comment type="similarity">
    <text evidence="2">Belongs to the RNA polymerase alpha chain family.</text>
</comment>
<sequence>MQGSVTEFLKPRLVDIEQVSSTHAKVTLEPLERGFGHTLGNALRRILLSSMPGCAVTEVEIDGVLHEYSTKEGVQEDILEILLNLKGLAVRVQGKDEVILTLNKSGIGPVTAADITHDGDVEIVKPQHVICHLTDENASISMRIKVQRGRGYVPASTRIHSEEDERPIGRLLVDACYSPVERIAYNVEAARVEQRTDLDKLVIEMETNGTIDPEEAIRRAATILAEQLEAFVDLRDVRQPEVKEEKPEFDPILLRPVDDLELTVRSANCLKAEAIHYIGDLVQRTEVELLKTPNLGKKSLTEIKDVLASRGLSLGMRLENWPPASIADE</sequence>
<evidence type="ECO:0000250" key="1"/>
<evidence type="ECO:0000305" key="2"/>
<reference key="1">
    <citation type="journal article" date="2002" name="Proc. Natl. Acad. Sci. U.S.A.">
        <title>Extensive mosaic structure revealed by the complete genome sequence of uropathogenic Escherichia coli.</title>
        <authorList>
            <person name="Welch R.A."/>
            <person name="Burland V."/>
            <person name="Plunkett G. III"/>
            <person name="Redford P."/>
            <person name="Roesch P."/>
            <person name="Rasko D."/>
            <person name="Buckles E.L."/>
            <person name="Liou S.-R."/>
            <person name="Boutin A."/>
            <person name="Hackett J."/>
            <person name="Stroud D."/>
            <person name="Mayhew G.F."/>
            <person name="Rose D.J."/>
            <person name="Zhou S."/>
            <person name="Schwartz D.C."/>
            <person name="Perna N.T."/>
            <person name="Mobley H.L.T."/>
            <person name="Donnenberg M.S."/>
            <person name="Blattner F.R."/>
        </authorList>
    </citation>
    <scope>NUCLEOTIDE SEQUENCE [LARGE SCALE GENOMIC DNA]</scope>
    <source>
        <strain>CFT073 / ATCC 700928 / UPEC</strain>
    </source>
</reference>
<gene>
    <name type="primary">rpoA</name>
    <name type="ordered locus">c4056</name>
</gene>
<organism>
    <name type="scientific">Escherichia coli O6:H1 (strain CFT073 / ATCC 700928 / UPEC)</name>
    <dbReference type="NCBI Taxonomy" id="199310"/>
    <lineage>
        <taxon>Bacteria</taxon>
        <taxon>Pseudomonadati</taxon>
        <taxon>Pseudomonadota</taxon>
        <taxon>Gammaproteobacteria</taxon>
        <taxon>Enterobacterales</taxon>
        <taxon>Enterobacteriaceae</taxon>
        <taxon>Escherichia</taxon>
    </lineage>
</organism>
<keyword id="KW-0240">DNA-directed RNA polymerase</keyword>
<keyword id="KW-0548">Nucleotidyltransferase</keyword>
<keyword id="KW-1185">Reference proteome</keyword>
<keyword id="KW-0804">Transcription</keyword>
<keyword id="KW-0808">Transferase</keyword>
<dbReference type="EC" id="2.7.7.6"/>
<dbReference type="EMBL" id="AE014075">
    <property type="protein sequence ID" value="AAN82494.1"/>
    <property type="molecule type" value="Genomic_DNA"/>
</dbReference>
<dbReference type="RefSeq" id="WP_001162094.1">
    <property type="nucleotide sequence ID" value="NZ_CP051263.1"/>
</dbReference>
<dbReference type="SMR" id="P0A7Z5"/>
<dbReference type="STRING" id="199310.c4056"/>
<dbReference type="GeneID" id="93778692"/>
<dbReference type="KEGG" id="ecc:c4056"/>
<dbReference type="eggNOG" id="COG0202">
    <property type="taxonomic scope" value="Bacteria"/>
</dbReference>
<dbReference type="HOGENOM" id="CLU_053084_0_0_6"/>
<dbReference type="BioCyc" id="ECOL199310:C4056-MONOMER"/>
<dbReference type="Proteomes" id="UP000001410">
    <property type="component" value="Chromosome"/>
</dbReference>
<dbReference type="GO" id="GO:0005737">
    <property type="term" value="C:cytoplasm"/>
    <property type="evidence" value="ECO:0007669"/>
    <property type="project" value="UniProtKB-ARBA"/>
</dbReference>
<dbReference type="GO" id="GO:0000428">
    <property type="term" value="C:DNA-directed RNA polymerase complex"/>
    <property type="evidence" value="ECO:0007669"/>
    <property type="project" value="UniProtKB-KW"/>
</dbReference>
<dbReference type="GO" id="GO:0003677">
    <property type="term" value="F:DNA binding"/>
    <property type="evidence" value="ECO:0007669"/>
    <property type="project" value="UniProtKB-UniRule"/>
</dbReference>
<dbReference type="GO" id="GO:0003899">
    <property type="term" value="F:DNA-directed RNA polymerase activity"/>
    <property type="evidence" value="ECO:0007669"/>
    <property type="project" value="UniProtKB-UniRule"/>
</dbReference>
<dbReference type="GO" id="GO:0046983">
    <property type="term" value="F:protein dimerization activity"/>
    <property type="evidence" value="ECO:0007669"/>
    <property type="project" value="InterPro"/>
</dbReference>
<dbReference type="GO" id="GO:0006351">
    <property type="term" value="P:DNA-templated transcription"/>
    <property type="evidence" value="ECO:0007669"/>
    <property type="project" value="UniProtKB-UniRule"/>
</dbReference>
<dbReference type="CDD" id="cd06928">
    <property type="entry name" value="RNAP_alpha_NTD"/>
    <property type="match status" value="1"/>
</dbReference>
<dbReference type="FunFam" id="1.10.150.20:FF:000001">
    <property type="entry name" value="DNA-directed RNA polymerase subunit alpha"/>
    <property type="match status" value="1"/>
</dbReference>
<dbReference type="FunFam" id="2.170.120.12:FF:000001">
    <property type="entry name" value="DNA-directed RNA polymerase subunit alpha"/>
    <property type="match status" value="1"/>
</dbReference>
<dbReference type="Gene3D" id="1.10.150.20">
    <property type="entry name" value="5' to 3' exonuclease, C-terminal subdomain"/>
    <property type="match status" value="1"/>
</dbReference>
<dbReference type="Gene3D" id="2.170.120.12">
    <property type="entry name" value="DNA-directed RNA polymerase, insert domain"/>
    <property type="match status" value="1"/>
</dbReference>
<dbReference type="Gene3D" id="3.30.1360.10">
    <property type="entry name" value="RNA polymerase, RBP11-like subunit"/>
    <property type="match status" value="1"/>
</dbReference>
<dbReference type="HAMAP" id="MF_00059">
    <property type="entry name" value="RNApol_bact_RpoA"/>
    <property type="match status" value="1"/>
</dbReference>
<dbReference type="InterPro" id="IPR011262">
    <property type="entry name" value="DNA-dir_RNA_pol_insert"/>
</dbReference>
<dbReference type="InterPro" id="IPR011263">
    <property type="entry name" value="DNA-dir_RNA_pol_RpoA/D/Rpb3"/>
</dbReference>
<dbReference type="InterPro" id="IPR011773">
    <property type="entry name" value="DNA-dir_RpoA"/>
</dbReference>
<dbReference type="InterPro" id="IPR036603">
    <property type="entry name" value="RBP11-like"/>
</dbReference>
<dbReference type="InterPro" id="IPR011260">
    <property type="entry name" value="RNAP_asu_C"/>
</dbReference>
<dbReference type="InterPro" id="IPR036643">
    <property type="entry name" value="RNApol_insert_sf"/>
</dbReference>
<dbReference type="NCBIfam" id="NF003513">
    <property type="entry name" value="PRK05182.1-2"/>
    <property type="match status" value="1"/>
</dbReference>
<dbReference type="NCBIfam" id="NF003519">
    <property type="entry name" value="PRK05182.2-5"/>
    <property type="match status" value="1"/>
</dbReference>
<dbReference type="NCBIfam" id="TIGR02027">
    <property type="entry name" value="rpoA"/>
    <property type="match status" value="1"/>
</dbReference>
<dbReference type="Pfam" id="PF01000">
    <property type="entry name" value="RNA_pol_A_bac"/>
    <property type="match status" value="1"/>
</dbReference>
<dbReference type="Pfam" id="PF03118">
    <property type="entry name" value="RNA_pol_A_CTD"/>
    <property type="match status" value="1"/>
</dbReference>
<dbReference type="Pfam" id="PF01193">
    <property type="entry name" value="RNA_pol_L"/>
    <property type="match status" value="1"/>
</dbReference>
<dbReference type="SMART" id="SM00662">
    <property type="entry name" value="RPOLD"/>
    <property type="match status" value="1"/>
</dbReference>
<dbReference type="SUPFAM" id="SSF47789">
    <property type="entry name" value="C-terminal domain of RNA polymerase alpha subunit"/>
    <property type="match status" value="1"/>
</dbReference>
<dbReference type="SUPFAM" id="SSF56553">
    <property type="entry name" value="Insert subdomain of RNA polymerase alpha subunit"/>
    <property type="match status" value="1"/>
</dbReference>
<dbReference type="SUPFAM" id="SSF55257">
    <property type="entry name" value="RBP11-like subunits of RNA polymerase"/>
    <property type="match status" value="1"/>
</dbReference>
<feature type="chain" id="PRO_0000175305" description="DNA-directed RNA polymerase subunit alpha">
    <location>
        <begin position="1"/>
        <end position="329"/>
    </location>
</feature>
<feature type="region of interest" description="Alpha N-terminal domain (alpha-NTD)" evidence="1">
    <location>
        <begin position="1"/>
        <end position="235"/>
    </location>
</feature>
<feature type="region of interest" description="Alpha C-terminal domain (alpha-CTD)" evidence="1">
    <location>
        <begin position="249"/>
        <end position="329"/>
    </location>
</feature>
<protein>
    <recommendedName>
        <fullName>DNA-directed RNA polymerase subunit alpha</fullName>
        <shortName>RNAP subunit alpha</shortName>
        <ecNumber>2.7.7.6</ecNumber>
    </recommendedName>
    <alternativeName>
        <fullName>RNA polymerase subunit alpha</fullName>
    </alternativeName>
    <alternativeName>
        <fullName>Transcriptase subunit alpha</fullName>
    </alternativeName>
</protein>
<proteinExistence type="inferred from homology"/>
<accession>P0A7Z5</accession>
<accession>P00574</accession>